<dbReference type="EMBL" id="CP000781">
    <property type="protein sequence ID" value="ABS69999.1"/>
    <property type="molecule type" value="Genomic_DNA"/>
</dbReference>
<dbReference type="SMR" id="A7IPQ3"/>
<dbReference type="STRING" id="78245.Xaut_4781"/>
<dbReference type="KEGG" id="xau:Xaut_4781"/>
<dbReference type="eggNOG" id="COG0098">
    <property type="taxonomic scope" value="Bacteria"/>
</dbReference>
<dbReference type="HOGENOM" id="CLU_065898_2_2_5"/>
<dbReference type="OrthoDB" id="9809045at2"/>
<dbReference type="PhylomeDB" id="A7IPQ3"/>
<dbReference type="Proteomes" id="UP000002417">
    <property type="component" value="Chromosome"/>
</dbReference>
<dbReference type="GO" id="GO:0015935">
    <property type="term" value="C:small ribosomal subunit"/>
    <property type="evidence" value="ECO:0007669"/>
    <property type="project" value="InterPro"/>
</dbReference>
<dbReference type="GO" id="GO:0019843">
    <property type="term" value="F:rRNA binding"/>
    <property type="evidence" value="ECO:0007669"/>
    <property type="project" value="UniProtKB-UniRule"/>
</dbReference>
<dbReference type="GO" id="GO:0003735">
    <property type="term" value="F:structural constituent of ribosome"/>
    <property type="evidence" value="ECO:0007669"/>
    <property type="project" value="InterPro"/>
</dbReference>
<dbReference type="GO" id="GO:0006412">
    <property type="term" value="P:translation"/>
    <property type="evidence" value="ECO:0007669"/>
    <property type="project" value="UniProtKB-UniRule"/>
</dbReference>
<dbReference type="FunFam" id="3.30.160.20:FF:000001">
    <property type="entry name" value="30S ribosomal protein S5"/>
    <property type="match status" value="1"/>
</dbReference>
<dbReference type="FunFam" id="3.30.230.10:FF:000002">
    <property type="entry name" value="30S ribosomal protein S5"/>
    <property type="match status" value="1"/>
</dbReference>
<dbReference type="Gene3D" id="3.30.160.20">
    <property type="match status" value="1"/>
</dbReference>
<dbReference type="Gene3D" id="3.30.230.10">
    <property type="match status" value="1"/>
</dbReference>
<dbReference type="HAMAP" id="MF_01307_B">
    <property type="entry name" value="Ribosomal_uS5_B"/>
    <property type="match status" value="1"/>
</dbReference>
<dbReference type="InterPro" id="IPR020568">
    <property type="entry name" value="Ribosomal_Su5_D2-typ_SF"/>
</dbReference>
<dbReference type="InterPro" id="IPR000851">
    <property type="entry name" value="Ribosomal_uS5"/>
</dbReference>
<dbReference type="InterPro" id="IPR005712">
    <property type="entry name" value="Ribosomal_uS5_bac-type"/>
</dbReference>
<dbReference type="InterPro" id="IPR005324">
    <property type="entry name" value="Ribosomal_uS5_C"/>
</dbReference>
<dbReference type="InterPro" id="IPR013810">
    <property type="entry name" value="Ribosomal_uS5_N"/>
</dbReference>
<dbReference type="InterPro" id="IPR018192">
    <property type="entry name" value="Ribosomal_uS5_N_CS"/>
</dbReference>
<dbReference type="InterPro" id="IPR014721">
    <property type="entry name" value="Ribsml_uS5_D2-typ_fold_subgr"/>
</dbReference>
<dbReference type="NCBIfam" id="TIGR01021">
    <property type="entry name" value="rpsE_bact"/>
    <property type="match status" value="1"/>
</dbReference>
<dbReference type="PANTHER" id="PTHR48277">
    <property type="entry name" value="MITOCHONDRIAL RIBOSOMAL PROTEIN S5"/>
    <property type="match status" value="1"/>
</dbReference>
<dbReference type="PANTHER" id="PTHR48277:SF1">
    <property type="entry name" value="MITOCHONDRIAL RIBOSOMAL PROTEIN S5"/>
    <property type="match status" value="1"/>
</dbReference>
<dbReference type="Pfam" id="PF00333">
    <property type="entry name" value="Ribosomal_S5"/>
    <property type="match status" value="1"/>
</dbReference>
<dbReference type="Pfam" id="PF03719">
    <property type="entry name" value="Ribosomal_S5_C"/>
    <property type="match status" value="1"/>
</dbReference>
<dbReference type="SUPFAM" id="SSF54768">
    <property type="entry name" value="dsRNA-binding domain-like"/>
    <property type="match status" value="1"/>
</dbReference>
<dbReference type="SUPFAM" id="SSF54211">
    <property type="entry name" value="Ribosomal protein S5 domain 2-like"/>
    <property type="match status" value="1"/>
</dbReference>
<dbReference type="PROSITE" id="PS00585">
    <property type="entry name" value="RIBOSOMAL_S5"/>
    <property type="match status" value="1"/>
</dbReference>
<dbReference type="PROSITE" id="PS50881">
    <property type="entry name" value="S5_DSRBD"/>
    <property type="match status" value="1"/>
</dbReference>
<evidence type="ECO:0000255" key="1">
    <source>
        <dbReference type="HAMAP-Rule" id="MF_01307"/>
    </source>
</evidence>
<evidence type="ECO:0000256" key="2">
    <source>
        <dbReference type="SAM" id="MobiDB-lite"/>
    </source>
</evidence>
<evidence type="ECO:0000305" key="3"/>
<comment type="function">
    <text evidence="1">With S4 and S12 plays an important role in translational accuracy.</text>
</comment>
<comment type="function">
    <text evidence="1">Located at the back of the 30S subunit body where it stabilizes the conformation of the head with respect to the body.</text>
</comment>
<comment type="subunit">
    <text evidence="1">Part of the 30S ribosomal subunit. Contacts proteins S4 and S8.</text>
</comment>
<comment type="domain">
    <text>The N-terminal domain interacts with the head of the 30S subunit; the C-terminal domain interacts with the body and contacts protein S4. The interaction surface between S4 and S5 is involved in control of translational fidelity.</text>
</comment>
<comment type="similarity">
    <text evidence="1">Belongs to the universal ribosomal protein uS5 family.</text>
</comment>
<protein>
    <recommendedName>
        <fullName evidence="1">Small ribosomal subunit protein uS5</fullName>
    </recommendedName>
    <alternativeName>
        <fullName evidence="3">30S ribosomal protein S5</fullName>
    </alternativeName>
</protein>
<reference key="1">
    <citation type="submission" date="2007-07" db="EMBL/GenBank/DDBJ databases">
        <title>Complete sequence of chromosome of Xanthobacter autotrophicus Py2.</title>
        <authorList>
            <consortium name="US DOE Joint Genome Institute"/>
            <person name="Copeland A."/>
            <person name="Lucas S."/>
            <person name="Lapidus A."/>
            <person name="Barry K."/>
            <person name="Glavina del Rio T."/>
            <person name="Hammon N."/>
            <person name="Israni S."/>
            <person name="Dalin E."/>
            <person name="Tice H."/>
            <person name="Pitluck S."/>
            <person name="Sims D."/>
            <person name="Brettin T."/>
            <person name="Bruce D."/>
            <person name="Detter J.C."/>
            <person name="Han C."/>
            <person name="Tapia R."/>
            <person name="Brainard J."/>
            <person name="Schmutz J."/>
            <person name="Larimer F."/>
            <person name="Land M."/>
            <person name="Hauser L."/>
            <person name="Kyrpides N."/>
            <person name="Kim E."/>
            <person name="Ensigns S.A."/>
            <person name="Richardson P."/>
        </authorList>
    </citation>
    <scope>NUCLEOTIDE SEQUENCE [LARGE SCALE GENOMIC DNA]</scope>
    <source>
        <strain>ATCC BAA-1158 / Py2</strain>
    </source>
</reference>
<name>RS5_XANP2</name>
<organism>
    <name type="scientific">Xanthobacter autotrophicus (strain ATCC BAA-1158 / Py2)</name>
    <dbReference type="NCBI Taxonomy" id="78245"/>
    <lineage>
        <taxon>Bacteria</taxon>
        <taxon>Pseudomonadati</taxon>
        <taxon>Pseudomonadota</taxon>
        <taxon>Alphaproteobacteria</taxon>
        <taxon>Hyphomicrobiales</taxon>
        <taxon>Xanthobacteraceae</taxon>
        <taxon>Xanthobacter</taxon>
    </lineage>
</organism>
<feature type="chain" id="PRO_1000140907" description="Small ribosomal subunit protein uS5">
    <location>
        <begin position="1"/>
        <end position="185"/>
    </location>
</feature>
<feature type="domain" description="S5 DRBM" evidence="1">
    <location>
        <begin position="18"/>
        <end position="81"/>
    </location>
</feature>
<feature type="region of interest" description="Disordered" evidence="2">
    <location>
        <begin position="157"/>
        <end position="185"/>
    </location>
</feature>
<feature type="compositionally biased region" description="Basic and acidic residues" evidence="2">
    <location>
        <begin position="176"/>
        <end position="185"/>
    </location>
</feature>
<keyword id="KW-1185">Reference proteome</keyword>
<keyword id="KW-0687">Ribonucleoprotein</keyword>
<keyword id="KW-0689">Ribosomal protein</keyword>
<keyword id="KW-0694">RNA-binding</keyword>
<keyword id="KW-0699">rRNA-binding</keyword>
<accession>A7IPQ3</accession>
<proteinExistence type="inferred from homology"/>
<gene>
    <name evidence="1" type="primary">rpsE</name>
    <name type="ordered locus">Xaut_4781</name>
</gene>
<sequence>MAREREQRHEREDRDNTFVDKLVHINRVAKVVKGGRRFGFAALVVVGDQKGRVGFGHGKAREVPEAIRKATESAKRALIRVPLREGRTLHHDVHGHHGAGKVILRAAPAGTGIIAGGPMRAVFETLGMHDVVAKSFGSSNPYNMVRATFDALKNQDSPRSVAARRGIKVSQLQSRRRVEDAEATD</sequence>